<accession>P39781</accession>
<proteinExistence type="predicted"/>
<keyword id="KW-0238">DNA-binding</keyword>
<keyword id="KW-1185">Reference proteome</keyword>
<dbReference type="EMBL" id="Z34287">
    <property type="protein sequence ID" value="CAA84043.1"/>
    <property type="molecule type" value="Genomic_DNA"/>
</dbReference>
<dbReference type="EMBL" id="Z70177">
    <property type="protein sequence ID" value="CAA94053.1"/>
    <property type="molecule type" value="Genomic_DNA"/>
</dbReference>
<dbReference type="EMBL" id="AL009126">
    <property type="protein sequence ID" value="CAB13109.2"/>
    <property type="molecule type" value="Genomic_DNA"/>
</dbReference>
<dbReference type="PIR" id="I40410">
    <property type="entry name" value="I40410"/>
</dbReference>
<dbReference type="RefSeq" id="NP_389134.2">
    <property type="nucleotide sequence ID" value="NC_000964.3"/>
</dbReference>
<dbReference type="RefSeq" id="WP_003245799.1">
    <property type="nucleotide sequence ID" value="NZ_OZ025638.1"/>
</dbReference>
<dbReference type="FunCoup" id="P39781">
    <property type="interactions" value="184"/>
</dbReference>
<dbReference type="STRING" id="224308.BSU12520"/>
<dbReference type="PaxDb" id="224308-BSU12520"/>
<dbReference type="EnsemblBacteria" id="CAB13109">
    <property type="protein sequence ID" value="CAB13109"/>
    <property type="gene ID" value="BSU_12520"/>
</dbReference>
<dbReference type="GeneID" id="939420"/>
<dbReference type="KEGG" id="bsu:BSU12520"/>
<dbReference type="PATRIC" id="fig|224308.179.peg.1354"/>
<dbReference type="eggNOG" id="COG1522">
    <property type="taxonomic scope" value="Bacteria"/>
</dbReference>
<dbReference type="InParanoid" id="P39781"/>
<dbReference type="OrthoDB" id="1821976at2"/>
<dbReference type="BioCyc" id="BSUB:BSU12520-MONOMER"/>
<dbReference type="Proteomes" id="UP000001570">
    <property type="component" value="Chromosome"/>
</dbReference>
<dbReference type="GO" id="GO:0003677">
    <property type="term" value="F:DNA binding"/>
    <property type="evidence" value="ECO:0007669"/>
    <property type="project" value="UniProtKB-KW"/>
</dbReference>
<dbReference type="InterPro" id="IPR036390">
    <property type="entry name" value="WH_DNA-bd_sf"/>
</dbReference>
<dbReference type="SUPFAM" id="SSF46785">
    <property type="entry name" value="Winged helix' DNA-binding domain"/>
    <property type="match status" value="1"/>
</dbReference>
<sequence length="278" mass="32043">MKNDKSYPFPTYSGLLNSEHYDKIGPALWLFLWFISSTTKEIEKDGVSWGIVLGHKPLKAREMAAVFGVSEKTVRRWLELLENHDYIKAVRAPYGLMISVKHSKKFSFRSDNTVHGSLKERPFSPQTPDTNDRTDIDKTNKYTAADDAVDHIAKRFTQLRSAQEGRTVYPSSRDYQAIARIVAIGVPVTQTIKWLEECFQAFENRRTAASETIKAFRYCSKFIEDRFFAQQAKKNAAIQHERMKKHDKTNNRTDFGRAEKRETSITGGQTGRIRRKQV</sequence>
<evidence type="ECO:0000255" key="1"/>
<evidence type="ECO:0000256" key="2">
    <source>
        <dbReference type="SAM" id="MobiDB-lite"/>
    </source>
</evidence>
<evidence type="ECO:0000305" key="3"/>
<reference key="1">
    <citation type="journal article" date="1994" name="J. Bacteriol.">
        <title>Genetic control of bacterial suicide: regulation of the induction of PBSX in Bacillus subtilis.</title>
        <authorList>
            <person name="McDonnell G.E."/>
            <person name="Wood H."/>
            <person name="Devine K.M."/>
            <person name="McConnell D.J."/>
        </authorList>
    </citation>
    <scope>NUCLEOTIDE SEQUENCE [GENOMIC DNA]</scope>
    <source>
        <strain>168 / SO113</strain>
    </source>
</reference>
<reference key="2">
    <citation type="submission" date="1996-03" db="EMBL/GenBank/DDBJ databases">
        <authorList>
            <person name="Krogh S."/>
            <person name="O'Reilly M."/>
            <person name="Nolan N."/>
            <person name="Devine K.M."/>
        </authorList>
    </citation>
    <scope>NUCLEOTIDE SEQUENCE [GENOMIC DNA]</scope>
    <source>
        <strain>168</strain>
    </source>
</reference>
<reference key="3">
    <citation type="journal article" date="1997" name="Nature">
        <title>The complete genome sequence of the Gram-positive bacterium Bacillus subtilis.</title>
        <authorList>
            <person name="Kunst F."/>
            <person name="Ogasawara N."/>
            <person name="Moszer I."/>
            <person name="Albertini A.M."/>
            <person name="Alloni G."/>
            <person name="Azevedo V."/>
            <person name="Bertero M.G."/>
            <person name="Bessieres P."/>
            <person name="Bolotin A."/>
            <person name="Borchert S."/>
            <person name="Borriss R."/>
            <person name="Boursier L."/>
            <person name="Brans A."/>
            <person name="Braun M."/>
            <person name="Brignell S.C."/>
            <person name="Bron S."/>
            <person name="Brouillet S."/>
            <person name="Bruschi C.V."/>
            <person name="Caldwell B."/>
            <person name="Capuano V."/>
            <person name="Carter N.M."/>
            <person name="Choi S.-K."/>
            <person name="Codani J.-J."/>
            <person name="Connerton I.F."/>
            <person name="Cummings N.J."/>
            <person name="Daniel R.A."/>
            <person name="Denizot F."/>
            <person name="Devine K.M."/>
            <person name="Duesterhoeft A."/>
            <person name="Ehrlich S.D."/>
            <person name="Emmerson P.T."/>
            <person name="Entian K.-D."/>
            <person name="Errington J."/>
            <person name="Fabret C."/>
            <person name="Ferrari E."/>
            <person name="Foulger D."/>
            <person name="Fritz C."/>
            <person name="Fujita M."/>
            <person name="Fujita Y."/>
            <person name="Fuma S."/>
            <person name="Galizzi A."/>
            <person name="Galleron N."/>
            <person name="Ghim S.-Y."/>
            <person name="Glaser P."/>
            <person name="Goffeau A."/>
            <person name="Golightly E.J."/>
            <person name="Grandi G."/>
            <person name="Guiseppi G."/>
            <person name="Guy B.J."/>
            <person name="Haga K."/>
            <person name="Haiech J."/>
            <person name="Harwood C.R."/>
            <person name="Henaut A."/>
            <person name="Hilbert H."/>
            <person name="Holsappel S."/>
            <person name="Hosono S."/>
            <person name="Hullo M.-F."/>
            <person name="Itaya M."/>
            <person name="Jones L.-M."/>
            <person name="Joris B."/>
            <person name="Karamata D."/>
            <person name="Kasahara Y."/>
            <person name="Klaerr-Blanchard M."/>
            <person name="Klein C."/>
            <person name="Kobayashi Y."/>
            <person name="Koetter P."/>
            <person name="Koningstein G."/>
            <person name="Krogh S."/>
            <person name="Kumano M."/>
            <person name="Kurita K."/>
            <person name="Lapidus A."/>
            <person name="Lardinois S."/>
            <person name="Lauber J."/>
            <person name="Lazarevic V."/>
            <person name="Lee S.-M."/>
            <person name="Levine A."/>
            <person name="Liu H."/>
            <person name="Masuda S."/>
            <person name="Mauel C."/>
            <person name="Medigue C."/>
            <person name="Medina N."/>
            <person name="Mellado R.P."/>
            <person name="Mizuno M."/>
            <person name="Moestl D."/>
            <person name="Nakai S."/>
            <person name="Noback M."/>
            <person name="Noone D."/>
            <person name="O'Reilly M."/>
            <person name="Ogawa K."/>
            <person name="Ogiwara A."/>
            <person name="Oudega B."/>
            <person name="Park S.-H."/>
            <person name="Parro V."/>
            <person name="Pohl T.M."/>
            <person name="Portetelle D."/>
            <person name="Porwollik S."/>
            <person name="Prescott A.M."/>
            <person name="Presecan E."/>
            <person name="Pujic P."/>
            <person name="Purnelle B."/>
            <person name="Rapoport G."/>
            <person name="Rey M."/>
            <person name="Reynolds S."/>
            <person name="Rieger M."/>
            <person name="Rivolta C."/>
            <person name="Rocha E."/>
            <person name="Roche B."/>
            <person name="Rose M."/>
            <person name="Sadaie Y."/>
            <person name="Sato T."/>
            <person name="Scanlan E."/>
            <person name="Schleich S."/>
            <person name="Schroeter R."/>
            <person name="Scoffone F."/>
            <person name="Sekiguchi J."/>
            <person name="Sekowska A."/>
            <person name="Seror S.J."/>
            <person name="Serror P."/>
            <person name="Shin B.-S."/>
            <person name="Soldo B."/>
            <person name="Sorokin A."/>
            <person name="Tacconi E."/>
            <person name="Takagi T."/>
            <person name="Takahashi H."/>
            <person name="Takemaru K."/>
            <person name="Takeuchi M."/>
            <person name="Tamakoshi A."/>
            <person name="Tanaka T."/>
            <person name="Terpstra P."/>
            <person name="Tognoni A."/>
            <person name="Tosato V."/>
            <person name="Uchiyama S."/>
            <person name="Vandenbol M."/>
            <person name="Vannier F."/>
            <person name="Vassarotti A."/>
            <person name="Viari A."/>
            <person name="Wambutt R."/>
            <person name="Wedler E."/>
            <person name="Wedler H."/>
            <person name="Weitzenegger T."/>
            <person name="Winters P."/>
            <person name="Wipat A."/>
            <person name="Yamamoto H."/>
            <person name="Yamane K."/>
            <person name="Yasumoto K."/>
            <person name="Yata K."/>
            <person name="Yoshida K."/>
            <person name="Yoshikawa H.-F."/>
            <person name="Zumstein E."/>
            <person name="Yoshikawa H."/>
            <person name="Danchin A."/>
        </authorList>
    </citation>
    <scope>NUCLEOTIDE SEQUENCE [LARGE SCALE GENOMIC DNA]</scope>
    <source>
        <strain>168</strain>
    </source>
</reference>
<reference key="4">
    <citation type="journal article" date="2009" name="Microbiology">
        <title>From a consortium sequence to a unified sequence: the Bacillus subtilis 168 reference genome a decade later.</title>
        <authorList>
            <person name="Barbe V."/>
            <person name="Cruveiller S."/>
            <person name="Kunst F."/>
            <person name="Lenoble P."/>
            <person name="Meurice G."/>
            <person name="Sekowska A."/>
            <person name="Vallenet D."/>
            <person name="Wang T."/>
            <person name="Moszer I."/>
            <person name="Medigue C."/>
            <person name="Danchin A."/>
        </authorList>
    </citation>
    <scope>SEQUENCE REVISION TO 48 AND 209</scope>
</reference>
<comment type="similarity">
    <text evidence="3">To B.subtilis YqaL.</text>
</comment>
<name>XKDB_BACSU</name>
<organism>
    <name type="scientific">Bacillus subtilis (strain 168)</name>
    <dbReference type="NCBI Taxonomy" id="224308"/>
    <lineage>
        <taxon>Bacteria</taxon>
        <taxon>Bacillati</taxon>
        <taxon>Bacillota</taxon>
        <taxon>Bacilli</taxon>
        <taxon>Bacillales</taxon>
        <taxon>Bacillaceae</taxon>
        <taxon>Bacillus</taxon>
    </lineage>
</organism>
<feature type="chain" id="PRO_0000066016" description="Phage-like element PBSX protein XkdB">
    <location>
        <begin position="1"/>
        <end position="278"/>
    </location>
</feature>
<feature type="DNA-binding region" description="H-T-H motif" evidence="1">
    <location>
        <begin position="58"/>
        <end position="80"/>
    </location>
</feature>
<feature type="region of interest" description="Disordered" evidence="2">
    <location>
        <begin position="117"/>
        <end position="136"/>
    </location>
</feature>
<feature type="region of interest" description="Disordered" evidence="2">
    <location>
        <begin position="239"/>
        <end position="278"/>
    </location>
</feature>
<feature type="compositionally biased region" description="Basic and acidic residues" evidence="2">
    <location>
        <begin position="248"/>
        <end position="263"/>
    </location>
</feature>
<feature type="sequence conflict" description="In Ref. 2; CAA94053." evidence="3" ref="2">
    <original>S</original>
    <variation>R</variation>
    <location>
        <position position="48"/>
    </location>
</feature>
<feature type="sequence conflict" description="In Ref. 1; CAA84043 and 2; CAA94053." evidence="3" ref="1 2">
    <location>
        <position position="209"/>
    </location>
</feature>
<protein>
    <recommendedName>
        <fullName>Phage-like element PBSX protein XkdB</fullName>
    </recommendedName>
</protein>
<gene>
    <name type="primary">xkdB</name>
    <name type="synonym">ykxB</name>
    <name type="ordered locus">BSU12520</name>
</gene>